<keyword id="KW-0521">NADP</keyword>
<keyword id="KW-0560">Oxidoreductase</keyword>
<keyword id="KW-1185">Reference proteome</keyword>
<gene>
    <name type="primary">GDHA</name>
    <name type="ORF">LACBIDRAFT_292653</name>
</gene>
<feature type="chain" id="PRO_0000182789" description="NADP-specific glutamate dehydrogenase">
    <location>
        <begin position="1"/>
        <end position="450"/>
    </location>
</feature>
<feature type="active site" evidence="2">
    <location>
        <position position="111"/>
    </location>
</feature>
<feature type="sequence conflict" description="In Ref. 1; AAA82936." evidence="3" ref="1">
    <original>Q</original>
    <variation>P</variation>
    <location>
        <position position="17"/>
    </location>
</feature>
<feature type="sequence conflict" description="In Ref. 1; AAA82936." evidence="3" ref="1">
    <original>E</original>
    <variation>G</variation>
    <location>
        <position position="31"/>
    </location>
</feature>
<feature type="sequence conflict" description="In Ref. 1; AAA82936." evidence="3" ref="1">
    <original>Q</original>
    <variation>P</variation>
    <location>
        <position position="38"/>
    </location>
</feature>
<feature type="sequence conflict" description="In Ref. 1; AAA82936." evidence="3" ref="1">
    <original>V</original>
    <variation>I</variation>
    <location>
        <position position="49"/>
    </location>
</feature>
<feature type="sequence conflict" description="In Ref. 1; AAA82936." evidence="3" ref="1">
    <original>A</original>
    <variation>G</variation>
    <location>
        <position position="231"/>
    </location>
</feature>
<feature type="sequence conflict" description="In Ref. 1; AAA82936." evidence="3" ref="1">
    <original>A</original>
    <variation>E</variation>
    <location>
        <position position="349"/>
    </location>
</feature>
<comment type="catalytic activity">
    <reaction>
        <text>L-glutamate + NADP(+) + H2O = 2-oxoglutarate + NH4(+) + NADPH + H(+)</text>
        <dbReference type="Rhea" id="RHEA:11612"/>
        <dbReference type="ChEBI" id="CHEBI:15377"/>
        <dbReference type="ChEBI" id="CHEBI:15378"/>
        <dbReference type="ChEBI" id="CHEBI:16810"/>
        <dbReference type="ChEBI" id="CHEBI:28938"/>
        <dbReference type="ChEBI" id="CHEBI:29985"/>
        <dbReference type="ChEBI" id="CHEBI:57783"/>
        <dbReference type="ChEBI" id="CHEBI:58349"/>
        <dbReference type="EC" id="1.4.1.4"/>
    </reaction>
</comment>
<comment type="subunit">
    <text evidence="1">Homohexamer.</text>
</comment>
<comment type="similarity">
    <text evidence="3">Belongs to the Glu/Leu/Phe/Val dehydrogenases family.</text>
</comment>
<accession>P54388</accession>
<accession>B0CZ97</accession>
<sequence length="450" mass="48550">MVLPVEPEYEQALSELQNSLKPFLAANPDYEKALEIVQIPERVLQFRVVWEDDQGKAQVNRGFRVQYNSALGPYKGGLRLHPSVNLSILKFLGFEQTFKNALTGLSMGGGKGGSDFDPKGKSDGEIRRFCTSFMSELFRHIGQDTDVPAGDIGTGAREIGYLFGAYKKLQNEFVGMLTGKGLAWGGSFIRPEATGYGLIYYVEHMIAKAAPEYSLSKPETLVAISGSGNVAQFTALKVIELGATVLSLSDSKGSLIAEKGYTKEFIKEIGQLKLKGGALESLAQREGYTYHAGKRPWSLLPVVHVALPGATQNEVSKTEAEDLIKAGVRIVAEGSNMGCTEDAIAVFEASRKAGAGGVWYAPGKASNCGGVAVSGLEMAQNSQRLAWTTDQVDQKLKKIMAECYEICLSAGTKWSGEEIKDGVLPSLLSGANVAGFIKVADAMREHGDWW</sequence>
<name>DHE4_LACBS</name>
<evidence type="ECO:0000250" key="1"/>
<evidence type="ECO:0000255" key="2">
    <source>
        <dbReference type="PROSITE-ProRule" id="PRU10011"/>
    </source>
</evidence>
<evidence type="ECO:0000305" key="3"/>
<dbReference type="EC" id="1.4.1.4"/>
<dbReference type="EMBL" id="U31369">
    <property type="protein sequence ID" value="AAA82936.1"/>
    <property type="molecule type" value="mRNA"/>
</dbReference>
<dbReference type="EMBL" id="DS547094">
    <property type="protein sequence ID" value="EDR12114.1"/>
    <property type="molecule type" value="Genomic_DNA"/>
</dbReference>
<dbReference type="RefSeq" id="XP_001876378.1">
    <property type="nucleotide sequence ID" value="XM_001876343.1"/>
</dbReference>
<dbReference type="SMR" id="P54388"/>
<dbReference type="FunCoup" id="P54388">
    <property type="interactions" value="238"/>
</dbReference>
<dbReference type="STRING" id="486041.P54388"/>
<dbReference type="GeneID" id="6072874"/>
<dbReference type="KEGG" id="lbc:LACBIDRAFT_292653"/>
<dbReference type="HOGENOM" id="CLU_025763_2_1_1"/>
<dbReference type="InParanoid" id="P54388"/>
<dbReference type="OrthoDB" id="6718861at2759"/>
<dbReference type="BRENDA" id="1.4.1.4">
    <property type="organism ID" value="2839"/>
</dbReference>
<dbReference type="Proteomes" id="UP000001194">
    <property type="component" value="Unassembled WGS sequence"/>
</dbReference>
<dbReference type="GO" id="GO:0005829">
    <property type="term" value="C:cytosol"/>
    <property type="evidence" value="ECO:0007669"/>
    <property type="project" value="TreeGrafter"/>
</dbReference>
<dbReference type="GO" id="GO:0004354">
    <property type="term" value="F:glutamate dehydrogenase (NADP+) activity"/>
    <property type="evidence" value="ECO:0007669"/>
    <property type="project" value="UniProtKB-EC"/>
</dbReference>
<dbReference type="GO" id="GO:0006537">
    <property type="term" value="P:glutamate biosynthetic process"/>
    <property type="evidence" value="ECO:0007669"/>
    <property type="project" value="TreeGrafter"/>
</dbReference>
<dbReference type="FunFam" id="1.10.285.10:FF:000001">
    <property type="entry name" value="Glutamate dehydrogenase"/>
    <property type="match status" value="1"/>
</dbReference>
<dbReference type="FunFam" id="3.40.50.10860:FF:000002">
    <property type="entry name" value="Glutamate dehydrogenase"/>
    <property type="match status" value="1"/>
</dbReference>
<dbReference type="FunFam" id="3.40.50.720:FF:000030">
    <property type="entry name" value="Glutamate dehydrogenase"/>
    <property type="match status" value="1"/>
</dbReference>
<dbReference type="Gene3D" id="1.10.285.10">
    <property type="entry name" value="Glutamate Dehydrogenase, chain A, domain 3"/>
    <property type="match status" value="2"/>
</dbReference>
<dbReference type="Gene3D" id="3.40.50.10860">
    <property type="entry name" value="Leucine Dehydrogenase, chain A, domain 1"/>
    <property type="match status" value="1"/>
</dbReference>
<dbReference type="Gene3D" id="3.40.50.720">
    <property type="entry name" value="NAD(P)-binding Rossmann-like Domain"/>
    <property type="match status" value="1"/>
</dbReference>
<dbReference type="InterPro" id="IPR046346">
    <property type="entry name" value="Aminoacid_DH-like_N_sf"/>
</dbReference>
<dbReference type="InterPro" id="IPR006095">
    <property type="entry name" value="Glu/Leu/Phe/Val/Trp_DH"/>
</dbReference>
<dbReference type="InterPro" id="IPR006096">
    <property type="entry name" value="Glu/Leu/Phe/Val/Trp_DH_C"/>
</dbReference>
<dbReference type="InterPro" id="IPR006097">
    <property type="entry name" value="Glu/Leu/Phe/Val/Trp_DH_dimer"/>
</dbReference>
<dbReference type="InterPro" id="IPR033524">
    <property type="entry name" value="Glu/Leu/Phe/Val_DH_AS"/>
</dbReference>
<dbReference type="InterPro" id="IPR014362">
    <property type="entry name" value="Glu_DH"/>
</dbReference>
<dbReference type="InterPro" id="IPR050724">
    <property type="entry name" value="Glu_Leu_Phe_Val_DH"/>
</dbReference>
<dbReference type="InterPro" id="IPR036291">
    <property type="entry name" value="NAD(P)-bd_dom_sf"/>
</dbReference>
<dbReference type="NCBIfam" id="NF006929">
    <property type="entry name" value="PRK09414.1"/>
    <property type="match status" value="1"/>
</dbReference>
<dbReference type="PANTHER" id="PTHR43571">
    <property type="entry name" value="NADP-SPECIFIC GLUTAMATE DEHYDROGENASE 1-RELATED"/>
    <property type="match status" value="1"/>
</dbReference>
<dbReference type="PANTHER" id="PTHR43571:SF1">
    <property type="entry name" value="NADP-SPECIFIC GLUTAMATE DEHYDROGENASE 1-RELATED"/>
    <property type="match status" value="1"/>
</dbReference>
<dbReference type="Pfam" id="PF00208">
    <property type="entry name" value="ELFV_dehydrog"/>
    <property type="match status" value="1"/>
</dbReference>
<dbReference type="Pfam" id="PF02812">
    <property type="entry name" value="ELFV_dehydrog_N"/>
    <property type="match status" value="1"/>
</dbReference>
<dbReference type="PIRSF" id="PIRSF000185">
    <property type="entry name" value="Glu_DH"/>
    <property type="match status" value="1"/>
</dbReference>
<dbReference type="PRINTS" id="PR00082">
    <property type="entry name" value="GLFDHDRGNASE"/>
</dbReference>
<dbReference type="SMART" id="SM00839">
    <property type="entry name" value="ELFV_dehydrog"/>
    <property type="match status" value="1"/>
</dbReference>
<dbReference type="SUPFAM" id="SSF53223">
    <property type="entry name" value="Aminoacid dehydrogenase-like, N-terminal domain"/>
    <property type="match status" value="1"/>
</dbReference>
<dbReference type="SUPFAM" id="SSF51735">
    <property type="entry name" value="NAD(P)-binding Rossmann-fold domains"/>
    <property type="match status" value="1"/>
</dbReference>
<dbReference type="PROSITE" id="PS00074">
    <property type="entry name" value="GLFV_DEHYDROGENASE"/>
    <property type="match status" value="1"/>
</dbReference>
<protein>
    <recommendedName>
        <fullName>NADP-specific glutamate dehydrogenase</fullName>
        <shortName>NADP-GDH</shortName>
        <ecNumber>1.4.1.4</ecNumber>
    </recommendedName>
    <alternativeName>
        <fullName>NADP-dependent glutamate dehydrogenase</fullName>
    </alternativeName>
</protein>
<proteinExistence type="evidence at transcript level"/>
<organism>
    <name type="scientific">Laccaria bicolor (strain S238N-H82 / ATCC MYA-4686)</name>
    <name type="common">Bicoloured deceiver</name>
    <name type="synonym">Laccaria laccata var. bicolor</name>
    <dbReference type="NCBI Taxonomy" id="486041"/>
    <lineage>
        <taxon>Eukaryota</taxon>
        <taxon>Fungi</taxon>
        <taxon>Dikarya</taxon>
        <taxon>Basidiomycota</taxon>
        <taxon>Agaricomycotina</taxon>
        <taxon>Agaricomycetes</taxon>
        <taxon>Agaricomycetidae</taxon>
        <taxon>Agaricales</taxon>
        <taxon>Agaricineae</taxon>
        <taxon>Hydnangiaceae</taxon>
        <taxon>Laccaria</taxon>
    </lineage>
</organism>
<reference key="1">
    <citation type="submission" date="1995-12" db="EMBL/GenBank/DDBJ databases">
        <title>Cloning, sequence analysis and expression of a cDNA encoding NADP-glutamate dehydrogenase from the ectomycorrhizal basidiomycete Laccaria bicolor.</title>
        <authorList>
            <person name="Lorillou S.S."/>
            <person name="Martin F.F."/>
        </authorList>
    </citation>
    <scope>NUCLEOTIDE SEQUENCE [MRNA]</scope>
</reference>
<reference key="2">
    <citation type="journal article" date="2008" name="Nature">
        <title>The genome of Laccaria bicolor provides insights into mycorrhizal symbiosis.</title>
        <authorList>
            <person name="Martin F."/>
            <person name="Aerts A."/>
            <person name="Ahren D."/>
            <person name="Brun A."/>
            <person name="Danchin E.G.J."/>
            <person name="Duchaussoy F."/>
            <person name="Gibon J."/>
            <person name="Kohler A."/>
            <person name="Lindquist E."/>
            <person name="Pereda V."/>
            <person name="Salamov A."/>
            <person name="Shapiro H.J."/>
            <person name="Wuyts J."/>
            <person name="Blaudez D."/>
            <person name="Buee M."/>
            <person name="Brokstein P."/>
            <person name="Canbaeck B."/>
            <person name="Cohen D."/>
            <person name="Courty P.E."/>
            <person name="Coutinho P.M."/>
            <person name="Delaruelle C."/>
            <person name="Detter J.C."/>
            <person name="Deveau A."/>
            <person name="DiFazio S."/>
            <person name="Duplessis S."/>
            <person name="Fraissinet-Tachet L."/>
            <person name="Lucic E."/>
            <person name="Frey-Klett P."/>
            <person name="Fourrey C."/>
            <person name="Feussner I."/>
            <person name="Gay G."/>
            <person name="Grimwood J."/>
            <person name="Hoegger P.J."/>
            <person name="Jain P."/>
            <person name="Kilaru S."/>
            <person name="Labbe J."/>
            <person name="Lin Y.C."/>
            <person name="Legue V."/>
            <person name="Le Tacon F."/>
            <person name="Marmeisse R."/>
            <person name="Melayah D."/>
            <person name="Montanini B."/>
            <person name="Muratet M."/>
            <person name="Nehls U."/>
            <person name="Niculita-Hirzel H."/>
            <person name="Oudot-Le Secq M.P."/>
            <person name="Peter M."/>
            <person name="Quesneville H."/>
            <person name="Rajashekar B."/>
            <person name="Reich M."/>
            <person name="Rouhier N."/>
            <person name="Schmutz J."/>
            <person name="Yin T."/>
            <person name="Chalot M."/>
            <person name="Henrissat B."/>
            <person name="Kuees U."/>
            <person name="Lucas S."/>
            <person name="Van de Peer Y."/>
            <person name="Podila G.K."/>
            <person name="Polle A."/>
            <person name="Pukkila P.J."/>
            <person name="Richardson P.M."/>
            <person name="Rouze P."/>
            <person name="Sanders I.R."/>
            <person name="Stajich J.E."/>
            <person name="Tunlid A."/>
            <person name="Tuskan G."/>
            <person name="Grigoriev I.V."/>
        </authorList>
    </citation>
    <scope>NUCLEOTIDE SEQUENCE [LARGE SCALE GENOMIC DNA]</scope>
    <source>
        <strain>S238N-H82 / ATCC MYA-4686</strain>
    </source>
</reference>